<sequence>MHNAPESVFNALVPMVVEQTAKGERSYDIYSRLLKERVIFLVGQVEEHMANLIVAQLLFLESENPDKEIYLYINSPGGSVTAGMAIYDTMQFIKPKVSTVCIGQACSMGAFLLAGGEKGMRHCLPNSRVMIHQPLGGFQGQASDIAIHAQEILGIKHKLNQMLSHHTGQPMEVIERDTDRDNFMSATQAVEYGLIDSVLTSR</sequence>
<comment type="function">
    <text evidence="1">Cleaves peptides in various proteins in a process that requires ATP hydrolysis. Has a chymotrypsin-like activity. Plays a major role in the degradation of misfolded proteins.</text>
</comment>
<comment type="catalytic activity">
    <reaction evidence="1">
        <text>Hydrolysis of proteins to small peptides in the presence of ATP and magnesium. alpha-casein is the usual test substrate. In the absence of ATP, only oligopeptides shorter than five residues are hydrolyzed (such as succinyl-Leu-Tyr-|-NHMec, and Leu-Tyr-Leu-|-Tyr-Trp, in which cleavage of the -Tyr-|-Leu- and -Tyr-|-Trp bonds also occurs).</text>
        <dbReference type="EC" id="3.4.21.92"/>
    </reaction>
</comment>
<comment type="subunit">
    <text evidence="1">Fourteen ClpP subunits assemble into 2 heptameric rings which stack back to back to give a disk-like structure with a central cavity, resembling the structure of eukaryotic proteasomes.</text>
</comment>
<comment type="subcellular location">
    <subcellularLocation>
        <location evidence="1">Cytoplasm</location>
    </subcellularLocation>
</comment>
<comment type="similarity">
    <text evidence="1">Belongs to the peptidase S14 family.</text>
</comment>
<dbReference type="EC" id="3.4.21.92" evidence="1"/>
<dbReference type="EMBL" id="CP000507">
    <property type="protein sequence ID" value="ABL99431.1"/>
    <property type="molecule type" value="Genomic_DNA"/>
</dbReference>
<dbReference type="RefSeq" id="WP_011759340.1">
    <property type="nucleotide sequence ID" value="NC_008700.1"/>
</dbReference>
<dbReference type="SMR" id="A1S4X5"/>
<dbReference type="STRING" id="326297.Sama_1224"/>
<dbReference type="MEROPS" id="S14.001"/>
<dbReference type="KEGG" id="saz:Sama_1224"/>
<dbReference type="eggNOG" id="COG0740">
    <property type="taxonomic scope" value="Bacteria"/>
</dbReference>
<dbReference type="HOGENOM" id="CLU_058707_3_2_6"/>
<dbReference type="OrthoDB" id="9802800at2"/>
<dbReference type="Proteomes" id="UP000009175">
    <property type="component" value="Chromosome"/>
</dbReference>
<dbReference type="GO" id="GO:0005737">
    <property type="term" value="C:cytoplasm"/>
    <property type="evidence" value="ECO:0007669"/>
    <property type="project" value="UniProtKB-SubCell"/>
</dbReference>
<dbReference type="GO" id="GO:0009368">
    <property type="term" value="C:endopeptidase Clp complex"/>
    <property type="evidence" value="ECO:0007669"/>
    <property type="project" value="TreeGrafter"/>
</dbReference>
<dbReference type="GO" id="GO:0004176">
    <property type="term" value="F:ATP-dependent peptidase activity"/>
    <property type="evidence" value="ECO:0007669"/>
    <property type="project" value="InterPro"/>
</dbReference>
<dbReference type="GO" id="GO:0051117">
    <property type="term" value="F:ATPase binding"/>
    <property type="evidence" value="ECO:0007669"/>
    <property type="project" value="TreeGrafter"/>
</dbReference>
<dbReference type="GO" id="GO:0004252">
    <property type="term" value="F:serine-type endopeptidase activity"/>
    <property type="evidence" value="ECO:0007669"/>
    <property type="project" value="UniProtKB-UniRule"/>
</dbReference>
<dbReference type="GO" id="GO:0006515">
    <property type="term" value="P:protein quality control for misfolded or incompletely synthesized proteins"/>
    <property type="evidence" value="ECO:0007669"/>
    <property type="project" value="TreeGrafter"/>
</dbReference>
<dbReference type="CDD" id="cd07017">
    <property type="entry name" value="S14_ClpP_2"/>
    <property type="match status" value="1"/>
</dbReference>
<dbReference type="FunFam" id="3.90.226.10:FF:000001">
    <property type="entry name" value="ATP-dependent Clp protease proteolytic subunit"/>
    <property type="match status" value="1"/>
</dbReference>
<dbReference type="Gene3D" id="3.90.226.10">
    <property type="entry name" value="2-enoyl-CoA Hydratase, Chain A, domain 1"/>
    <property type="match status" value="1"/>
</dbReference>
<dbReference type="HAMAP" id="MF_00444">
    <property type="entry name" value="ClpP"/>
    <property type="match status" value="1"/>
</dbReference>
<dbReference type="InterPro" id="IPR001907">
    <property type="entry name" value="ClpP"/>
</dbReference>
<dbReference type="InterPro" id="IPR029045">
    <property type="entry name" value="ClpP/crotonase-like_dom_sf"/>
</dbReference>
<dbReference type="InterPro" id="IPR023562">
    <property type="entry name" value="ClpP/TepA"/>
</dbReference>
<dbReference type="InterPro" id="IPR033135">
    <property type="entry name" value="ClpP_His_AS"/>
</dbReference>
<dbReference type="InterPro" id="IPR018215">
    <property type="entry name" value="ClpP_Ser_AS"/>
</dbReference>
<dbReference type="NCBIfam" id="TIGR00493">
    <property type="entry name" value="clpP"/>
    <property type="match status" value="1"/>
</dbReference>
<dbReference type="NCBIfam" id="NF001368">
    <property type="entry name" value="PRK00277.1"/>
    <property type="match status" value="1"/>
</dbReference>
<dbReference type="NCBIfam" id="NF009205">
    <property type="entry name" value="PRK12553.1"/>
    <property type="match status" value="1"/>
</dbReference>
<dbReference type="PANTHER" id="PTHR10381">
    <property type="entry name" value="ATP-DEPENDENT CLP PROTEASE PROTEOLYTIC SUBUNIT"/>
    <property type="match status" value="1"/>
</dbReference>
<dbReference type="PANTHER" id="PTHR10381:SF70">
    <property type="entry name" value="ATP-DEPENDENT CLP PROTEASE PROTEOLYTIC SUBUNIT"/>
    <property type="match status" value="1"/>
</dbReference>
<dbReference type="Pfam" id="PF00574">
    <property type="entry name" value="CLP_protease"/>
    <property type="match status" value="1"/>
</dbReference>
<dbReference type="PRINTS" id="PR00127">
    <property type="entry name" value="CLPPROTEASEP"/>
</dbReference>
<dbReference type="SUPFAM" id="SSF52096">
    <property type="entry name" value="ClpP/crotonase"/>
    <property type="match status" value="1"/>
</dbReference>
<dbReference type="PROSITE" id="PS00382">
    <property type="entry name" value="CLP_PROTEASE_HIS"/>
    <property type="match status" value="1"/>
</dbReference>
<dbReference type="PROSITE" id="PS00381">
    <property type="entry name" value="CLP_PROTEASE_SER"/>
    <property type="match status" value="1"/>
</dbReference>
<organism>
    <name type="scientific">Shewanella amazonensis (strain ATCC BAA-1098 / SB2B)</name>
    <dbReference type="NCBI Taxonomy" id="326297"/>
    <lineage>
        <taxon>Bacteria</taxon>
        <taxon>Pseudomonadati</taxon>
        <taxon>Pseudomonadota</taxon>
        <taxon>Gammaproteobacteria</taxon>
        <taxon>Alteromonadales</taxon>
        <taxon>Shewanellaceae</taxon>
        <taxon>Shewanella</taxon>
    </lineage>
</organism>
<evidence type="ECO:0000255" key="1">
    <source>
        <dbReference type="HAMAP-Rule" id="MF_00444"/>
    </source>
</evidence>
<feature type="chain" id="PRO_1000072343" description="ATP-dependent Clp protease proteolytic subunit">
    <location>
        <begin position="1"/>
        <end position="202"/>
    </location>
</feature>
<feature type="active site" description="Nucleophile" evidence="1">
    <location>
        <position position="107"/>
    </location>
</feature>
<feature type="active site" evidence="1">
    <location>
        <position position="132"/>
    </location>
</feature>
<proteinExistence type="inferred from homology"/>
<gene>
    <name evidence="1" type="primary">clpP</name>
    <name type="ordered locus">Sama_1224</name>
</gene>
<reference key="1">
    <citation type="submission" date="2006-12" db="EMBL/GenBank/DDBJ databases">
        <title>Complete sequence of Shewanella amazonensis SB2B.</title>
        <authorList>
            <consortium name="US DOE Joint Genome Institute"/>
            <person name="Copeland A."/>
            <person name="Lucas S."/>
            <person name="Lapidus A."/>
            <person name="Barry K."/>
            <person name="Detter J.C."/>
            <person name="Glavina del Rio T."/>
            <person name="Hammon N."/>
            <person name="Israni S."/>
            <person name="Dalin E."/>
            <person name="Tice H."/>
            <person name="Pitluck S."/>
            <person name="Munk A.C."/>
            <person name="Brettin T."/>
            <person name="Bruce D."/>
            <person name="Han C."/>
            <person name="Tapia R."/>
            <person name="Gilna P."/>
            <person name="Schmutz J."/>
            <person name="Larimer F."/>
            <person name="Land M."/>
            <person name="Hauser L."/>
            <person name="Kyrpides N."/>
            <person name="Mikhailova N."/>
            <person name="Fredrickson J."/>
            <person name="Richardson P."/>
        </authorList>
    </citation>
    <scope>NUCLEOTIDE SEQUENCE [LARGE SCALE GENOMIC DNA]</scope>
    <source>
        <strain>ATCC BAA-1098 / SB2B</strain>
    </source>
</reference>
<name>CLPP_SHEAM</name>
<accession>A1S4X5</accession>
<keyword id="KW-0963">Cytoplasm</keyword>
<keyword id="KW-0378">Hydrolase</keyword>
<keyword id="KW-0645">Protease</keyword>
<keyword id="KW-1185">Reference proteome</keyword>
<keyword id="KW-0720">Serine protease</keyword>
<protein>
    <recommendedName>
        <fullName evidence="1">ATP-dependent Clp protease proteolytic subunit</fullName>
        <ecNumber evidence="1">3.4.21.92</ecNumber>
    </recommendedName>
    <alternativeName>
        <fullName evidence="1">Endopeptidase Clp</fullName>
    </alternativeName>
</protein>